<keyword id="KW-0067">ATP-binding</keyword>
<keyword id="KW-0963">Cytoplasm</keyword>
<keyword id="KW-0418">Kinase</keyword>
<keyword id="KW-0545">Nucleotide biosynthesis</keyword>
<keyword id="KW-0547">Nucleotide-binding</keyword>
<keyword id="KW-1185">Reference proteome</keyword>
<keyword id="KW-0808">Transferase</keyword>
<feature type="chain" id="PRO_0000158735" description="Adenylate kinase">
    <location>
        <begin position="1"/>
        <end position="186"/>
    </location>
</feature>
<feature type="region of interest" description="NMP" evidence="1">
    <location>
        <begin position="30"/>
        <end position="59"/>
    </location>
</feature>
<feature type="region of interest" description="LID" evidence="1">
    <location>
        <begin position="126"/>
        <end position="136"/>
    </location>
</feature>
<feature type="binding site" evidence="1">
    <location>
        <begin position="10"/>
        <end position="15"/>
    </location>
    <ligand>
        <name>ATP</name>
        <dbReference type="ChEBI" id="CHEBI:30616"/>
    </ligand>
</feature>
<feature type="binding site" evidence="1">
    <location>
        <position position="31"/>
    </location>
    <ligand>
        <name>AMP</name>
        <dbReference type="ChEBI" id="CHEBI:456215"/>
    </ligand>
</feature>
<feature type="binding site" evidence="1">
    <location>
        <position position="36"/>
    </location>
    <ligand>
        <name>AMP</name>
        <dbReference type="ChEBI" id="CHEBI:456215"/>
    </ligand>
</feature>
<feature type="binding site" evidence="1">
    <location>
        <begin position="57"/>
        <end position="59"/>
    </location>
    <ligand>
        <name>AMP</name>
        <dbReference type="ChEBI" id="CHEBI:456215"/>
    </ligand>
</feature>
<feature type="binding site" evidence="1">
    <location>
        <begin position="85"/>
        <end position="88"/>
    </location>
    <ligand>
        <name>AMP</name>
        <dbReference type="ChEBI" id="CHEBI:456215"/>
    </ligand>
</feature>
<feature type="binding site" evidence="1">
    <location>
        <position position="92"/>
    </location>
    <ligand>
        <name>AMP</name>
        <dbReference type="ChEBI" id="CHEBI:456215"/>
    </ligand>
</feature>
<feature type="binding site" evidence="1">
    <location>
        <position position="127"/>
    </location>
    <ligand>
        <name>ATP</name>
        <dbReference type="ChEBI" id="CHEBI:30616"/>
    </ligand>
</feature>
<feature type="binding site" evidence="1">
    <location>
        <position position="133"/>
    </location>
    <ligand>
        <name>AMP</name>
        <dbReference type="ChEBI" id="CHEBI:456215"/>
    </ligand>
</feature>
<feature type="binding site" evidence="1">
    <location>
        <position position="144"/>
    </location>
    <ligand>
        <name>AMP</name>
        <dbReference type="ChEBI" id="CHEBI:456215"/>
    </ligand>
</feature>
<feature type="binding site" evidence="1">
    <location>
        <position position="172"/>
    </location>
    <ligand>
        <name>ATP</name>
        <dbReference type="ChEBI" id="CHEBI:30616"/>
    </ligand>
</feature>
<dbReference type="EC" id="2.7.4.3" evidence="1"/>
<dbReference type="EMBL" id="AE014295">
    <property type="protein sequence ID" value="AAN25390.1"/>
    <property type="molecule type" value="Genomic_DNA"/>
</dbReference>
<dbReference type="RefSeq" id="NP_696754.1">
    <property type="nucleotide sequence ID" value="NC_004307.2"/>
</dbReference>
<dbReference type="RefSeq" id="WP_007053046.1">
    <property type="nucleotide sequence ID" value="NC_004307.2"/>
</dbReference>
<dbReference type="SMR" id="Q8G3Z8"/>
<dbReference type="STRING" id="206672.BL1601"/>
<dbReference type="EnsemblBacteria" id="AAN25390">
    <property type="protein sequence ID" value="AAN25390"/>
    <property type="gene ID" value="BL1601"/>
</dbReference>
<dbReference type="KEGG" id="blo:BL1601"/>
<dbReference type="PATRIC" id="fig|206672.9.peg.1656"/>
<dbReference type="HOGENOM" id="CLU_032354_4_1_11"/>
<dbReference type="OrthoDB" id="9805030at2"/>
<dbReference type="PhylomeDB" id="Q8G3Z8"/>
<dbReference type="UniPathway" id="UPA00588">
    <property type="reaction ID" value="UER00649"/>
</dbReference>
<dbReference type="Proteomes" id="UP000000439">
    <property type="component" value="Chromosome"/>
</dbReference>
<dbReference type="GO" id="GO:0005737">
    <property type="term" value="C:cytoplasm"/>
    <property type="evidence" value="ECO:0007669"/>
    <property type="project" value="UniProtKB-SubCell"/>
</dbReference>
<dbReference type="GO" id="GO:0004017">
    <property type="term" value="F:adenylate kinase activity"/>
    <property type="evidence" value="ECO:0007669"/>
    <property type="project" value="UniProtKB-UniRule"/>
</dbReference>
<dbReference type="GO" id="GO:0005524">
    <property type="term" value="F:ATP binding"/>
    <property type="evidence" value="ECO:0007669"/>
    <property type="project" value="UniProtKB-UniRule"/>
</dbReference>
<dbReference type="GO" id="GO:0044209">
    <property type="term" value="P:AMP salvage"/>
    <property type="evidence" value="ECO:0007669"/>
    <property type="project" value="UniProtKB-UniRule"/>
</dbReference>
<dbReference type="CDD" id="cd01428">
    <property type="entry name" value="ADK"/>
    <property type="match status" value="1"/>
</dbReference>
<dbReference type="Gene3D" id="3.40.50.300">
    <property type="entry name" value="P-loop containing nucleotide triphosphate hydrolases"/>
    <property type="match status" value="1"/>
</dbReference>
<dbReference type="HAMAP" id="MF_00235">
    <property type="entry name" value="Adenylate_kinase_Adk"/>
    <property type="match status" value="1"/>
</dbReference>
<dbReference type="InterPro" id="IPR000850">
    <property type="entry name" value="Adenylat/UMP-CMP_kin"/>
</dbReference>
<dbReference type="InterPro" id="IPR033690">
    <property type="entry name" value="Adenylat_kinase_CS"/>
</dbReference>
<dbReference type="InterPro" id="IPR027417">
    <property type="entry name" value="P-loop_NTPase"/>
</dbReference>
<dbReference type="NCBIfam" id="NF001381">
    <property type="entry name" value="PRK00279.1-3"/>
    <property type="match status" value="1"/>
</dbReference>
<dbReference type="NCBIfam" id="NF011100">
    <property type="entry name" value="PRK14527.1"/>
    <property type="match status" value="1"/>
</dbReference>
<dbReference type="NCBIfam" id="NF011101">
    <property type="entry name" value="PRK14528.1"/>
    <property type="match status" value="1"/>
</dbReference>
<dbReference type="NCBIfam" id="NF011104">
    <property type="entry name" value="PRK14531.1"/>
    <property type="match status" value="1"/>
</dbReference>
<dbReference type="NCBIfam" id="NF011105">
    <property type="entry name" value="PRK14532.1"/>
    <property type="match status" value="1"/>
</dbReference>
<dbReference type="PANTHER" id="PTHR23359">
    <property type="entry name" value="NUCLEOTIDE KINASE"/>
    <property type="match status" value="1"/>
</dbReference>
<dbReference type="Pfam" id="PF00406">
    <property type="entry name" value="ADK"/>
    <property type="match status" value="1"/>
</dbReference>
<dbReference type="PRINTS" id="PR00094">
    <property type="entry name" value="ADENYLTKNASE"/>
</dbReference>
<dbReference type="SUPFAM" id="SSF52540">
    <property type="entry name" value="P-loop containing nucleoside triphosphate hydrolases"/>
    <property type="match status" value="1"/>
</dbReference>
<dbReference type="PROSITE" id="PS00113">
    <property type="entry name" value="ADENYLATE_KINASE"/>
    <property type="match status" value="1"/>
</dbReference>
<gene>
    <name evidence="1" type="primary">adk</name>
    <name type="ordered locus">BL1601</name>
</gene>
<name>KAD_BIFLO</name>
<sequence length="186" mass="20500">MRLLIMGPQGVGKGTQAALLAEHFNIPTISTGDIFRYNIKNKTELGLEAMSYTDKGELVPDSLTNKIVKDRLAKEDCKNGWILDGYPRNAAQVTALDEMLADLDTPLDHVVALEAARDVLLERMKKRAAEQGRADDTPEAIAKRLETYEKETAPLLDIYEARGLLVVVNGVGDIDEISGRIISHLE</sequence>
<proteinExistence type="inferred from homology"/>
<protein>
    <recommendedName>
        <fullName evidence="1">Adenylate kinase</fullName>
        <shortName evidence="1">AK</shortName>
        <ecNumber evidence="1">2.7.4.3</ecNumber>
    </recommendedName>
    <alternativeName>
        <fullName evidence="1">ATP-AMP transphosphorylase</fullName>
    </alternativeName>
    <alternativeName>
        <fullName evidence="1">ATP:AMP phosphotransferase</fullName>
    </alternativeName>
    <alternativeName>
        <fullName evidence="1">Adenylate monophosphate kinase</fullName>
    </alternativeName>
</protein>
<organism>
    <name type="scientific">Bifidobacterium longum (strain NCC 2705)</name>
    <dbReference type="NCBI Taxonomy" id="206672"/>
    <lineage>
        <taxon>Bacteria</taxon>
        <taxon>Bacillati</taxon>
        <taxon>Actinomycetota</taxon>
        <taxon>Actinomycetes</taxon>
        <taxon>Bifidobacteriales</taxon>
        <taxon>Bifidobacteriaceae</taxon>
        <taxon>Bifidobacterium</taxon>
    </lineage>
</organism>
<accession>Q8G3Z8</accession>
<comment type="function">
    <text evidence="1">Catalyzes the reversible transfer of the terminal phosphate group between ATP and AMP. Plays an important role in cellular energy homeostasis and in adenine nucleotide metabolism.</text>
</comment>
<comment type="catalytic activity">
    <reaction evidence="1">
        <text>AMP + ATP = 2 ADP</text>
        <dbReference type="Rhea" id="RHEA:12973"/>
        <dbReference type="ChEBI" id="CHEBI:30616"/>
        <dbReference type="ChEBI" id="CHEBI:456215"/>
        <dbReference type="ChEBI" id="CHEBI:456216"/>
        <dbReference type="EC" id="2.7.4.3"/>
    </reaction>
</comment>
<comment type="pathway">
    <text evidence="1">Purine metabolism; AMP biosynthesis via salvage pathway; AMP from ADP: step 1/1.</text>
</comment>
<comment type="subunit">
    <text evidence="1">Monomer.</text>
</comment>
<comment type="subcellular location">
    <subcellularLocation>
        <location evidence="1">Cytoplasm</location>
    </subcellularLocation>
</comment>
<comment type="domain">
    <text evidence="1">Consists of three domains, a large central CORE domain and two small peripheral domains, NMPbind and LID, which undergo movements during catalysis. The LID domain closes over the site of phosphoryl transfer upon ATP binding. Assembling and dissambling the active center during each catalytic cycle provides an effective means to prevent ATP hydrolysis.</text>
</comment>
<comment type="similarity">
    <text evidence="1">Belongs to the adenylate kinase family.</text>
</comment>
<reference key="1">
    <citation type="journal article" date="2002" name="Proc. Natl. Acad. Sci. U.S.A.">
        <title>The genome sequence of Bifidobacterium longum reflects its adaptation to the human gastrointestinal tract.</title>
        <authorList>
            <person name="Schell M.A."/>
            <person name="Karmirantzou M."/>
            <person name="Snel B."/>
            <person name="Vilanova D."/>
            <person name="Berger B."/>
            <person name="Pessi G."/>
            <person name="Zwahlen M.-C."/>
            <person name="Desiere F."/>
            <person name="Bork P."/>
            <person name="Delley M."/>
            <person name="Pridmore R.D."/>
            <person name="Arigoni F."/>
        </authorList>
    </citation>
    <scope>NUCLEOTIDE SEQUENCE [LARGE SCALE GENOMIC DNA]</scope>
    <source>
        <strain>NCC 2705</strain>
    </source>
</reference>
<evidence type="ECO:0000255" key="1">
    <source>
        <dbReference type="HAMAP-Rule" id="MF_00235"/>
    </source>
</evidence>